<sequence>MSHQHPVYRRIVVKVGTNVITGRNGKLDPAILDSLTSQIAALMQDGVEVILVTSGAVSAGRGIVSLSGNLTPVETRQVLAATGQIRLINAYNDRFKKHGITGAQLLVTKGDFRDRQHYLNMRTCFEALLQQKIVPIVNENDAVAITELMFTDNDELSGLIASMLQVDANIILSNVDGLFDTQSEGNPVIEEIDPGTKNFSQYIRPGKSEFGRGGMLTKCNIAHKLSRLGITVHIANGTTPGILQTIAHGGKAGTKFIAQKPKQSRKRWVALSEGLEKGAVIINQGAIDALTSGQRATSLLPVGITGVEGSFQRGDIIRICSTDGKVIGYGMASCTAEKARSAMGQKGLKPVIHYDHLYLVP</sequence>
<comment type="function">
    <text evidence="1">Catalyzes the transfer of a phosphate group to glutamate to form L-glutamate 5-phosphate.</text>
</comment>
<comment type="catalytic activity">
    <reaction evidence="1">
        <text>L-glutamate + ATP = L-glutamyl 5-phosphate + ADP</text>
        <dbReference type="Rhea" id="RHEA:14877"/>
        <dbReference type="ChEBI" id="CHEBI:29985"/>
        <dbReference type="ChEBI" id="CHEBI:30616"/>
        <dbReference type="ChEBI" id="CHEBI:58274"/>
        <dbReference type="ChEBI" id="CHEBI:456216"/>
        <dbReference type="EC" id="2.7.2.11"/>
    </reaction>
</comment>
<comment type="pathway">
    <text evidence="1">Amino-acid biosynthesis; L-proline biosynthesis; L-glutamate 5-semialdehyde from L-glutamate: step 1/2.</text>
</comment>
<comment type="subcellular location">
    <subcellularLocation>
        <location evidence="1">Cytoplasm</location>
    </subcellularLocation>
</comment>
<comment type="similarity">
    <text evidence="1">Belongs to the glutamate 5-kinase family.</text>
</comment>
<protein>
    <recommendedName>
        <fullName evidence="1">Glutamate 5-kinase</fullName>
        <ecNumber evidence="1">2.7.2.11</ecNumber>
    </recommendedName>
    <alternativeName>
        <fullName evidence="1">Gamma-glutamyl kinase</fullName>
        <shortName evidence="1">GK</shortName>
    </alternativeName>
</protein>
<organism>
    <name type="scientific">Chlorobaculum tepidum (strain ATCC 49652 / DSM 12025 / NBRC 103806 / TLS)</name>
    <name type="common">Chlorobium tepidum</name>
    <dbReference type="NCBI Taxonomy" id="194439"/>
    <lineage>
        <taxon>Bacteria</taxon>
        <taxon>Pseudomonadati</taxon>
        <taxon>Chlorobiota</taxon>
        <taxon>Chlorobiia</taxon>
        <taxon>Chlorobiales</taxon>
        <taxon>Chlorobiaceae</taxon>
        <taxon>Chlorobaculum</taxon>
    </lineage>
</organism>
<accession>Q8KCG4</accession>
<feature type="chain" id="PRO_0000109658" description="Glutamate 5-kinase">
    <location>
        <begin position="1"/>
        <end position="361"/>
    </location>
</feature>
<feature type="domain" description="PUA" evidence="1">
    <location>
        <begin position="277"/>
        <end position="355"/>
    </location>
</feature>
<feature type="binding site" evidence="1">
    <location>
        <position position="14"/>
    </location>
    <ligand>
        <name>ATP</name>
        <dbReference type="ChEBI" id="CHEBI:30616"/>
    </ligand>
</feature>
<feature type="binding site" evidence="1">
    <location>
        <position position="54"/>
    </location>
    <ligand>
        <name>substrate</name>
    </ligand>
</feature>
<feature type="binding site" evidence="1">
    <location>
        <position position="141"/>
    </location>
    <ligand>
        <name>substrate</name>
    </ligand>
</feature>
<feature type="binding site" evidence="1">
    <location>
        <position position="153"/>
    </location>
    <ligand>
        <name>substrate</name>
    </ligand>
</feature>
<reference key="1">
    <citation type="journal article" date="2002" name="Proc. Natl. Acad. Sci. U.S.A.">
        <title>The complete genome sequence of Chlorobium tepidum TLS, a photosynthetic, anaerobic, green-sulfur bacterium.</title>
        <authorList>
            <person name="Eisen J.A."/>
            <person name="Nelson K.E."/>
            <person name="Paulsen I.T."/>
            <person name="Heidelberg J.F."/>
            <person name="Wu M."/>
            <person name="Dodson R.J."/>
            <person name="DeBoy R.T."/>
            <person name="Gwinn M.L."/>
            <person name="Nelson W.C."/>
            <person name="Haft D.H."/>
            <person name="Hickey E.K."/>
            <person name="Peterson J.D."/>
            <person name="Durkin A.S."/>
            <person name="Kolonay J.F."/>
            <person name="Yang F."/>
            <person name="Holt I.E."/>
            <person name="Umayam L.A."/>
            <person name="Mason T.M."/>
            <person name="Brenner M."/>
            <person name="Shea T.P."/>
            <person name="Parksey D.S."/>
            <person name="Nierman W.C."/>
            <person name="Feldblyum T.V."/>
            <person name="Hansen C.L."/>
            <person name="Craven M.B."/>
            <person name="Radune D."/>
            <person name="Vamathevan J.J."/>
            <person name="Khouri H.M."/>
            <person name="White O."/>
            <person name="Gruber T.M."/>
            <person name="Ketchum K.A."/>
            <person name="Venter J.C."/>
            <person name="Tettelin H."/>
            <person name="Bryant D.A."/>
            <person name="Fraser C.M."/>
        </authorList>
    </citation>
    <scope>NUCLEOTIDE SEQUENCE [LARGE SCALE GENOMIC DNA]</scope>
    <source>
        <strain>ATCC 49652 / DSM 12025 / NBRC 103806 / TLS</strain>
    </source>
</reference>
<name>PROB_CHLTE</name>
<keyword id="KW-0028">Amino-acid biosynthesis</keyword>
<keyword id="KW-0067">ATP-binding</keyword>
<keyword id="KW-0963">Cytoplasm</keyword>
<keyword id="KW-0418">Kinase</keyword>
<keyword id="KW-0547">Nucleotide-binding</keyword>
<keyword id="KW-0641">Proline biosynthesis</keyword>
<keyword id="KW-1185">Reference proteome</keyword>
<keyword id="KW-0808">Transferase</keyword>
<dbReference type="EC" id="2.7.2.11" evidence="1"/>
<dbReference type="EMBL" id="AE006470">
    <property type="protein sequence ID" value="AAM72685.1"/>
    <property type="molecule type" value="Genomic_DNA"/>
</dbReference>
<dbReference type="RefSeq" id="NP_662343.1">
    <property type="nucleotide sequence ID" value="NC_002932.3"/>
</dbReference>
<dbReference type="RefSeq" id="WP_010933124.1">
    <property type="nucleotide sequence ID" value="NC_002932.3"/>
</dbReference>
<dbReference type="SMR" id="Q8KCG4"/>
<dbReference type="STRING" id="194439.CT1457"/>
<dbReference type="EnsemblBacteria" id="AAM72685">
    <property type="protein sequence ID" value="AAM72685"/>
    <property type="gene ID" value="CT1457"/>
</dbReference>
<dbReference type="KEGG" id="cte:CT1457"/>
<dbReference type="PATRIC" id="fig|194439.7.peg.1323"/>
<dbReference type="eggNOG" id="COG0263">
    <property type="taxonomic scope" value="Bacteria"/>
</dbReference>
<dbReference type="HOGENOM" id="CLU_025400_2_0_10"/>
<dbReference type="OrthoDB" id="9804434at2"/>
<dbReference type="UniPathway" id="UPA00098">
    <property type="reaction ID" value="UER00359"/>
</dbReference>
<dbReference type="Proteomes" id="UP000001007">
    <property type="component" value="Chromosome"/>
</dbReference>
<dbReference type="GO" id="GO:0005829">
    <property type="term" value="C:cytosol"/>
    <property type="evidence" value="ECO:0007669"/>
    <property type="project" value="TreeGrafter"/>
</dbReference>
<dbReference type="GO" id="GO:0005524">
    <property type="term" value="F:ATP binding"/>
    <property type="evidence" value="ECO:0007669"/>
    <property type="project" value="UniProtKB-KW"/>
</dbReference>
<dbReference type="GO" id="GO:0004349">
    <property type="term" value="F:glutamate 5-kinase activity"/>
    <property type="evidence" value="ECO:0007669"/>
    <property type="project" value="UniProtKB-UniRule"/>
</dbReference>
<dbReference type="GO" id="GO:0003723">
    <property type="term" value="F:RNA binding"/>
    <property type="evidence" value="ECO:0007669"/>
    <property type="project" value="InterPro"/>
</dbReference>
<dbReference type="GO" id="GO:0055129">
    <property type="term" value="P:L-proline biosynthetic process"/>
    <property type="evidence" value="ECO:0007669"/>
    <property type="project" value="UniProtKB-UniRule"/>
</dbReference>
<dbReference type="CDD" id="cd04242">
    <property type="entry name" value="AAK_G5K_ProB"/>
    <property type="match status" value="1"/>
</dbReference>
<dbReference type="CDD" id="cd21157">
    <property type="entry name" value="PUA_G5K"/>
    <property type="match status" value="1"/>
</dbReference>
<dbReference type="FunFam" id="3.40.1160.10:FF:000006">
    <property type="entry name" value="Glutamate 5-kinase"/>
    <property type="match status" value="1"/>
</dbReference>
<dbReference type="Gene3D" id="3.40.1160.10">
    <property type="entry name" value="Acetylglutamate kinase-like"/>
    <property type="match status" value="1"/>
</dbReference>
<dbReference type="Gene3D" id="2.30.130.10">
    <property type="entry name" value="PUA domain"/>
    <property type="match status" value="1"/>
</dbReference>
<dbReference type="HAMAP" id="MF_00456">
    <property type="entry name" value="ProB"/>
    <property type="match status" value="1"/>
</dbReference>
<dbReference type="InterPro" id="IPR036393">
    <property type="entry name" value="AceGlu_kinase-like_sf"/>
</dbReference>
<dbReference type="InterPro" id="IPR001048">
    <property type="entry name" value="Asp/Glu/Uridylate_kinase"/>
</dbReference>
<dbReference type="InterPro" id="IPR041739">
    <property type="entry name" value="G5K_ProB"/>
</dbReference>
<dbReference type="InterPro" id="IPR001057">
    <property type="entry name" value="Glu/AcGlu_kinase"/>
</dbReference>
<dbReference type="InterPro" id="IPR011529">
    <property type="entry name" value="Glu_5kinase"/>
</dbReference>
<dbReference type="InterPro" id="IPR005715">
    <property type="entry name" value="Glu_5kinase/COase_Synthase"/>
</dbReference>
<dbReference type="InterPro" id="IPR019797">
    <property type="entry name" value="Glutamate_5-kinase_CS"/>
</dbReference>
<dbReference type="InterPro" id="IPR002478">
    <property type="entry name" value="PUA"/>
</dbReference>
<dbReference type="InterPro" id="IPR015947">
    <property type="entry name" value="PUA-like_sf"/>
</dbReference>
<dbReference type="InterPro" id="IPR036974">
    <property type="entry name" value="PUA_sf"/>
</dbReference>
<dbReference type="NCBIfam" id="TIGR01027">
    <property type="entry name" value="proB"/>
    <property type="match status" value="1"/>
</dbReference>
<dbReference type="PANTHER" id="PTHR43654">
    <property type="entry name" value="GLUTAMATE 5-KINASE"/>
    <property type="match status" value="1"/>
</dbReference>
<dbReference type="PANTHER" id="PTHR43654:SF1">
    <property type="entry name" value="ISOPENTENYL PHOSPHATE KINASE"/>
    <property type="match status" value="1"/>
</dbReference>
<dbReference type="Pfam" id="PF00696">
    <property type="entry name" value="AA_kinase"/>
    <property type="match status" value="1"/>
</dbReference>
<dbReference type="Pfam" id="PF01472">
    <property type="entry name" value="PUA"/>
    <property type="match status" value="1"/>
</dbReference>
<dbReference type="PIRSF" id="PIRSF000729">
    <property type="entry name" value="GK"/>
    <property type="match status" value="1"/>
</dbReference>
<dbReference type="PRINTS" id="PR00474">
    <property type="entry name" value="GLU5KINASE"/>
</dbReference>
<dbReference type="SMART" id="SM00359">
    <property type="entry name" value="PUA"/>
    <property type="match status" value="1"/>
</dbReference>
<dbReference type="SUPFAM" id="SSF53633">
    <property type="entry name" value="Carbamate kinase-like"/>
    <property type="match status" value="1"/>
</dbReference>
<dbReference type="SUPFAM" id="SSF88697">
    <property type="entry name" value="PUA domain-like"/>
    <property type="match status" value="1"/>
</dbReference>
<dbReference type="PROSITE" id="PS00902">
    <property type="entry name" value="GLUTAMATE_5_KINASE"/>
    <property type="match status" value="1"/>
</dbReference>
<dbReference type="PROSITE" id="PS50890">
    <property type="entry name" value="PUA"/>
    <property type="match status" value="1"/>
</dbReference>
<gene>
    <name evidence="1" type="primary">proB</name>
    <name type="ordered locus">CT1457</name>
</gene>
<evidence type="ECO:0000255" key="1">
    <source>
        <dbReference type="HAMAP-Rule" id="MF_00456"/>
    </source>
</evidence>
<proteinExistence type="inferred from homology"/>